<proteinExistence type="inferred from homology"/>
<organism>
    <name type="scientific">Escherichia coli O8 (strain IAI1)</name>
    <dbReference type="NCBI Taxonomy" id="585034"/>
    <lineage>
        <taxon>Bacteria</taxon>
        <taxon>Pseudomonadati</taxon>
        <taxon>Pseudomonadota</taxon>
        <taxon>Gammaproteobacteria</taxon>
        <taxon>Enterobacterales</taxon>
        <taxon>Enterobacteriaceae</taxon>
        <taxon>Escherichia</taxon>
    </lineage>
</organism>
<dbReference type="EC" id="3.5.-.-" evidence="1"/>
<dbReference type="EMBL" id="CU928160">
    <property type="protein sequence ID" value="CAQ97919.1"/>
    <property type="molecule type" value="Genomic_DNA"/>
</dbReference>
<dbReference type="RefSeq" id="WP_001126780.1">
    <property type="nucleotide sequence ID" value="NC_011741.1"/>
</dbReference>
<dbReference type="SMR" id="B7M8Z5"/>
<dbReference type="GeneID" id="75171086"/>
<dbReference type="KEGG" id="ecr:ECIAI1_1055"/>
<dbReference type="HOGENOM" id="CLU_100715_7_3_6"/>
<dbReference type="GO" id="GO:0005829">
    <property type="term" value="C:cytosol"/>
    <property type="evidence" value="ECO:0007669"/>
    <property type="project" value="TreeGrafter"/>
</dbReference>
<dbReference type="GO" id="GO:0019239">
    <property type="term" value="F:deaminase activity"/>
    <property type="evidence" value="ECO:0007669"/>
    <property type="project" value="TreeGrafter"/>
</dbReference>
<dbReference type="GO" id="GO:0019740">
    <property type="term" value="P:nitrogen utilization"/>
    <property type="evidence" value="ECO:0007669"/>
    <property type="project" value="UniProtKB-UniRule"/>
</dbReference>
<dbReference type="GO" id="GO:0006212">
    <property type="term" value="P:uracil catabolic process"/>
    <property type="evidence" value="ECO:0007669"/>
    <property type="project" value="UniProtKB-UniRule"/>
</dbReference>
<dbReference type="CDD" id="cd00448">
    <property type="entry name" value="YjgF_YER057c_UK114_family"/>
    <property type="match status" value="1"/>
</dbReference>
<dbReference type="FunFam" id="3.30.1330.40:FF:000003">
    <property type="entry name" value="Putative aminoacrylate peracid reductase RutC"/>
    <property type="match status" value="1"/>
</dbReference>
<dbReference type="Gene3D" id="3.30.1330.40">
    <property type="entry name" value="RutC-like"/>
    <property type="match status" value="1"/>
</dbReference>
<dbReference type="HAMAP" id="MF_00831">
    <property type="entry name" value="RutC"/>
    <property type="match status" value="1"/>
</dbReference>
<dbReference type="InterPro" id="IPR019897">
    <property type="entry name" value="RidA_CS"/>
</dbReference>
<dbReference type="InterPro" id="IPR019898">
    <property type="entry name" value="RutC"/>
</dbReference>
<dbReference type="InterPro" id="IPR035959">
    <property type="entry name" value="RutC-like_sf"/>
</dbReference>
<dbReference type="InterPro" id="IPR006175">
    <property type="entry name" value="YjgF/YER057c/UK114"/>
</dbReference>
<dbReference type="NCBIfam" id="TIGR03610">
    <property type="entry name" value="RutC"/>
    <property type="match status" value="1"/>
</dbReference>
<dbReference type="PANTHER" id="PTHR11803">
    <property type="entry name" value="2-IMINOBUTANOATE/2-IMINOPROPANOATE DEAMINASE RIDA"/>
    <property type="match status" value="1"/>
</dbReference>
<dbReference type="PANTHER" id="PTHR11803:SF58">
    <property type="entry name" value="PROTEIN HMF1-RELATED"/>
    <property type="match status" value="1"/>
</dbReference>
<dbReference type="Pfam" id="PF01042">
    <property type="entry name" value="Ribonuc_L-PSP"/>
    <property type="match status" value="1"/>
</dbReference>
<dbReference type="SUPFAM" id="SSF55298">
    <property type="entry name" value="YjgF-like"/>
    <property type="match status" value="1"/>
</dbReference>
<dbReference type="PROSITE" id="PS01094">
    <property type="entry name" value="UPF0076"/>
    <property type="match status" value="1"/>
</dbReference>
<accession>B7M8Z5</accession>
<evidence type="ECO:0000255" key="1">
    <source>
        <dbReference type="HAMAP-Rule" id="MF_00831"/>
    </source>
</evidence>
<protein>
    <recommendedName>
        <fullName evidence="1">3-aminoacrylate deaminase RutC</fullName>
        <shortName evidence="1">3-AA deaminase</shortName>
        <ecNumber evidence="1">3.5.-.-</ecNumber>
    </recommendedName>
</protein>
<gene>
    <name evidence="1" type="primary">rutC</name>
    <name type="ordered locus">ECIAI1_1055</name>
</gene>
<comment type="function">
    <text evidence="1">Involved in pyrimidine catabolism. Catalyzes the deamination of 3-aminoacrylate to malonic semialdehyde, a reaction that can also occur spontaneously. RutC may facilitate the reaction and modulate the metabolic fitness, rather than catalyzing essential functions.</text>
</comment>
<comment type="catalytic activity">
    <reaction evidence="1">
        <text>(Z)-3-aminoacrylate + H2O + H(+) = 3-oxopropanoate + NH4(+)</text>
        <dbReference type="Rhea" id="RHEA:34947"/>
        <dbReference type="ChEBI" id="CHEBI:15377"/>
        <dbReference type="ChEBI" id="CHEBI:15378"/>
        <dbReference type="ChEBI" id="CHEBI:28938"/>
        <dbReference type="ChEBI" id="CHEBI:33190"/>
        <dbReference type="ChEBI" id="CHEBI:59894"/>
    </reaction>
</comment>
<comment type="subunit">
    <text evidence="1">Homotrimer.</text>
</comment>
<comment type="similarity">
    <text evidence="1">Belongs to the RutC family.</text>
</comment>
<feature type="chain" id="PRO_0000402747" description="3-aminoacrylate deaminase RutC">
    <location>
        <begin position="1"/>
        <end position="128"/>
    </location>
</feature>
<keyword id="KW-0378">Hydrolase</keyword>
<sequence>MPKSVIIPAGSSAPLAPFVPGTLADGVVYVSGTLAFDQHNNVLFADDPKAQTRHVLETIRKVIETAGGTMADVTFNSIFITDWKNYAAINEIYAEFFPGDKPARFCIQCGLVKPDALVEIATIAHIAK</sequence>
<reference key="1">
    <citation type="journal article" date="2009" name="PLoS Genet.">
        <title>Organised genome dynamics in the Escherichia coli species results in highly diverse adaptive paths.</title>
        <authorList>
            <person name="Touchon M."/>
            <person name="Hoede C."/>
            <person name="Tenaillon O."/>
            <person name="Barbe V."/>
            <person name="Baeriswyl S."/>
            <person name="Bidet P."/>
            <person name="Bingen E."/>
            <person name="Bonacorsi S."/>
            <person name="Bouchier C."/>
            <person name="Bouvet O."/>
            <person name="Calteau A."/>
            <person name="Chiapello H."/>
            <person name="Clermont O."/>
            <person name="Cruveiller S."/>
            <person name="Danchin A."/>
            <person name="Diard M."/>
            <person name="Dossat C."/>
            <person name="Karoui M.E."/>
            <person name="Frapy E."/>
            <person name="Garry L."/>
            <person name="Ghigo J.M."/>
            <person name="Gilles A.M."/>
            <person name="Johnson J."/>
            <person name="Le Bouguenec C."/>
            <person name="Lescat M."/>
            <person name="Mangenot S."/>
            <person name="Martinez-Jehanne V."/>
            <person name="Matic I."/>
            <person name="Nassif X."/>
            <person name="Oztas S."/>
            <person name="Petit M.A."/>
            <person name="Pichon C."/>
            <person name="Rouy Z."/>
            <person name="Ruf C.S."/>
            <person name="Schneider D."/>
            <person name="Tourret J."/>
            <person name="Vacherie B."/>
            <person name="Vallenet D."/>
            <person name="Medigue C."/>
            <person name="Rocha E.P.C."/>
            <person name="Denamur E."/>
        </authorList>
    </citation>
    <scope>NUCLEOTIDE SEQUENCE [LARGE SCALE GENOMIC DNA]</scope>
    <source>
        <strain>IAI1</strain>
    </source>
</reference>
<name>RUTC_ECO8A</name>